<dbReference type="EMBL" id="AF442204">
    <property type="protein sequence ID" value="AAL34545.1"/>
    <property type="molecule type" value="Genomic_DNA"/>
</dbReference>
<dbReference type="EMBL" id="CP001287">
    <property type="protein sequence ID" value="ACK68156.1"/>
    <property type="molecule type" value="Genomic_DNA"/>
</dbReference>
<dbReference type="RefSeq" id="WP_015785210.1">
    <property type="nucleotide sequence ID" value="NC_011726.1"/>
</dbReference>
<dbReference type="SMR" id="Q8VL14"/>
<dbReference type="STRING" id="41431.PCC8801_4232"/>
<dbReference type="KEGG" id="cyp:PCC8801_4232"/>
<dbReference type="eggNOG" id="COG4251">
    <property type="taxonomic scope" value="Bacteria"/>
</dbReference>
<dbReference type="HOGENOM" id="CLU_144073_0_0_3"/>
<dbReference type="OrthoDB" id="5458519at2"/>
<dbReference type="Proteomes" id="UP000008204">
    <property type="component" value="Chromosome"/>
</dbReference>
<dbReference type="GO" id="GO:0007623">
    <property type="term" value="P:circadian rhythm"/>
    <property type="evidence" value="ECO:0007669"/>
    <property type="project" value="UniProtKB-UniRule"/>
</dbReference>
<dbReference type="CDD" id="cd02978">
    <property type="entry name" value="KaiB_like"/>
    <property type="match status" value="1"/>
</dbReference>
<dbReference type="FunFam" id="3.40.30.10:FF:000180">
    <property type="entry name" value="Circadian clock protein KaiB"/>
    <property type="match status" value="1"/>
</dbReference>
<dbReference type="Gene3D" id="3.40.30.10">
    <property type="entry name" value="Glutaredoxin"/>
    <property type="match status" value="1"/>
</dbReference>
<dbReference type="HAMAP" id="MF_01835">
    <property type="entry name" value="KaiB"/>
    <property type="match status" value="1"/>
</dbReference>
<dbReference type="InterPro" id="IPR013474">
    <property type="entry name" value="Circ_KaiB"/>
</dbReference>
<dbReference type="InterPro" id="IPR039022">
    <property type="entry name" value="KaiB-like"/>
</dbReference>
<dbReference type="InterPro" id="IPR011649">
    <property type="entry name" value="KaiB_domain"/>
</dbReference>
<dbReference type="InterPro" id="IPR036249">
    <property type="entry name" value="Thioredoxin-like_sf"/>
</dbReference>
<dbReference type="NCBIfam" id="TIGR02654">
    <property type="entry name" value="circ_KaiB"/>
    <property type="match status" value="1"/>
</dbReference>
<dbReference type="NCBIfam" id="NF006798">
    <property type="entry name" value="PRK09301.1"/>
    <property type="match status" value="1"/>
</dbReference>
<dbReference type="PANTHER" id="PTHR41709:SF2">
    <property type="entry name" value="CIRCADIAN CLOCK PROTEIN KAIB2"/>
    <property type="match status" value="1"/>
</dbReference>
<dbReference type="PANTHER" id="PTHR41709">
    <property type="entry name" value="KAIB-LIKE PROTEIN 1"/>
    <property type="match status" value="1"/>
</dbReference>
<dbReference type="Pfam" id="PF07689">
    <property type="entry name" value="KaiB"/>
    <property type="match status" value="1"/>
</dbReference>
<dbReference type="SMART" id="SM01248">
    <property type="entry name" value="KaiB"/>
    <property type="match status" value="1"/>
</dbReference>
<dbReference type="SUPFAM" id="SSF52833">
    <property type="entry name" value="Thioredoxin-like"/>
    <property type="match status" value="1"/>
</dbReference>
<evidence type="ECO:0000255" key="1">
    <source>
        <dbReference type="HAMAP-Rule" id="MF_01835"/>
    </source>
</evidence>
<evidence type="ECO:0000303" key="2">
    <source ref="1"/>
</evidence>
<evidence type="ECO:0000312" key="3">
    <source>
        <dbReference type="EMBL" id="AAL34545.1"/>
    </source>
</evidence>
<evidence type="ECO:0000312" key="4">
    <source>
        <dbReference type="EMBL" id="ACK68156.1"/>
    </source>
</evidence>
<proteinExistence type="inferred from homology"/>
<accession>Q8VL14</accession>
<accession>B7K6A3</accession>
<feature type="chain" id="PRO_0000217768" description="Circadian clock oscillator protein KaiB">
    <location>
        <begin position="1"/>
        <end position="104"/>
    </location>
</feature>
<comment type="function">
    <text evidence="1">Key component of the KaiABC oscillator complex, which constitutes the main circadian regulator in cyanobacteria. Complex composition changes during the circadian cycle to control KaiC phosphorylation. KaiA stimulates KaiC autophosphorylation, while KaiB sequesters KaiA, leading to KaiC autodephosphorylation. Phospho-Ser-431 KaiC accumulation triggers binding of KaiB to form the KaiB(6):KaiC(6) complex, leading to changes in output regulators CikA and SasA. KaiB switches to a thioredoxin-like fold (KaiB(fs)) when bound to KaiC. KaiB(6):KaiC(6) formation exposes a site for KaiA binding that sequesters KaiA from KaiC, making the KaiC(6):KaiB(6):KaiA(12) complex that results in KaiC autodephosphorylation.</text>
</comment>
<comment type="function">
    <text evidence="1">A metamorphic protein which reversibly switches between an inactive tetrameric fold and a rare, thioredoxin-like monomeric fold (KaiB(fs)). KaiB(fs) binds phospho-KaiC, KaiA and CikA. KaiA and CikA compete for binding to KaiB(fs), and KaiB(fs) and SasA compete for binding to KaiC, thus the clock oscillator and output signal pathway are tightly coupled.</text>
</comment>
<comment type="subunit">
    <text evidence="1">The KaiABC complex composition changes during the circadian cycle to control KaiC phosphorylation. Complexes KaiC(6), KaiA(2-4):KaiC(6), KaiB(6):KaiC(6) and KaiC(6):KaiB(6):KaiA(12) are among the most important forms, many form cooperatively. Undergoes a major conformational rearrangment; in the free state forms homotetramers as a dimer of dimers. When bound to the CI domain of KaiC switches to a monomeric thioredoxin-fold (KaiB(fs)). KaiB(fs) binds CikA, leading it to dephosphorylate phospho-RpaA.</text>
</comment>
<comment type="domain">
    <text evidence="1">Has 2 forms, fold switches to a thioredoxin-like fold (KaiB(fs)) when bound to KaiC.</text>
</comment>
<comment type="similarity">
    <text evidence="1">Belongs to the KaiB family.</text>
</comment>
<gene>
    <name evidence="1 2" type="primary">kaiB</name>
    <name type="ordered locus">PCC8801_4232</name>
</gene>
<keyword id="KW-0090">Biological rhythms</keyword>
<keyword id="KW-1185">Reference proteome</keyword>
<protein>
    <recommendedName>
        <fullName evidence="1">Circadian clock oscillator protein KaiB</fullName>
    </recommendedName>
</protein>
<organism>
    <name type="scientific">Rippkaea orientalis (strain PCC 8801 / RF-1)</name>
    <name type="common">Cyanothece sp. (strain PCC 8801)</name>
    <dbReference type="NCBI Taxonomy" id="41431"/>
    <lineage>
        <taxon>Bacteria</taxon>
        <taxon>Bacillati</taxon>
        <taxon>Cyanobacteriota</taxon>
        <taxon>Cyanophyceae</taxon>
        <taxon>Oscillatoriophycideae</taxon>
        <taxon>Chroococcales</taxon>
        <taxon>Aphanothecaceae</taxon>
        <taxon>Rippkaea</taxon>
        <taxon>Rippkaea orientalis</taxon>
    </lineage>
</organism>
<sequence>MVNFKKTYVLKLYVAGNTPNSVRALKTLKNILEDEFKGVYALKVIDVLKNPQLAEEDKILATPTLSKILPPPVRKIIGDLSDREKVLIGLDLLYEEIRERESEL</sequence>
<reference evidence="3" key="1">
    <citation type="submission" date="2001-10" db="EMBL/GenBank/DDBJ databases">
        <title>Hypothetical kaiB and kaiC genes in Synechococcus RF-1.</title>
        <authorList>
            <person name="Lin R.-F."/>
            <person name="Huang T.-C."/>
            <person name="Chen L.-R."/>
        </authorList>
    </citation>
    <scope>NUCLEOTIDE SEQUENCE [GENOMIC DNA]</scope>
    <source>
        <strain>PCC 8801 / RF-1</strain>
    </source>
</reference>
<reference evidence="4" key="2">
    <citation type="journal article" date="2011" name="MBio">
        <title>Novel metabolic attributes of the genus Cyanothece, comprising a group of unicellular nitrogen-fixing Cyanobacteria.</title>
        <authorList>
            <person name="Bandyopadhyay A."/>
            <person name="Elvitigala T."/>
            <person name="Welsh E."/>
            <person name="Stockel J."/>
            <person name="Liberton M."/>
            <person name="Min H."/>
            <person name="Sherman L.A."/>
            <person name="Pakrasi H.B."/>
        </authorList>
    </citation>
    <scope>NUCLEOTIDE SEQUENCE [LARGE SCALE GENOMIC DNA]</scope>
    <source>
        <strain>PCC 8801 / RF-1</strain>
    </source>
</reference>
<name>KAIB_RIPO1</name>